<proteinExistence type="inferred from homology"/>
<name>PG091_VARV</name>
<dbReference type="EMBL" id="L22579">
    <property type="protein sequence ID" value="AAA60817.1"/>
    <property type="molecule type" value="Genomic_DNA"/>
</dbReference>
<dbReference type="PIR" id="T28507">
    <property type="entry name" value="T28507"/>
</dbReference>
<dbReference type="SMR" id="P0DOU4"/>
<dbReference type="KEGG" id="vg:1486435"/>
<dbReference type="Proteomes" id="UP000119805">
    <property type="component" value="Segment"/>
</dbReference>
<dbReference type="GO" id="GO:0030430">
    <property type="term" value="C:host cell cytoplasm"/>
    <property type="evidence" value="ECO:0007669"/>
    <property type="project" value="UniProtKB-SubCell"/>
</dbReference>
<dbReference type="GO" id="GO:0044423">
    <property type="term" value="C:virion component"/>
    <property type="evidence" value="ECO:0007669"/>
    <property type="project" value="UniProtKB-KW"/>
</dbReference>
<dbReference type="Gene3D" id="3.90.1720.10">
    <property type="entry name" value="endopeptidase domain like (from Nostoc punctiforme)"/>
    <property type="match status" value="1"/>
</dbReference>
<dbReference type="InterPro" id="IPR038765">
    <property type="entry name" value="Papain-like_cys_pep_sf"/>
</dbReference>
<dbReference type="InterPro" id="IPR024453">
    <property type="entry name" value="Peptidase_C92"/>
</dbReference>
<dbReference type="Pfam" id="PF05708">
    <property type="entry name" value="Peptidase_C92"/>
    <property type="match status" value="1"/>
</dbReference>
<dbReference type="SUPFAM" id="SSF54001">
    <property type="entry name" value="Cysteine proteinases"/>
    <property type="match status" value="1"/>
</dbReference>
<comment type="function">
    <text evidence="1">Contributes to virulence in host but not to replication in cell culture.</text>
</comment>
<comment type="subcellular location">
    <subcellularLocation>
        <location evidence="1">Virion</location>
    </subcellularLocation>
    <subcellularLocation>
        <location evidence="1">Host cytoplasm</location>
    </subcellularLocation>
    <text evidence="1">Localized to the interior of virions, primarily between the membrane and core.</text>
</comment>
<comment type="miscellaneous">
    <text evidence="1">Displays sequence similarity with a group of bacterial permuted NlpC/P60 proteins. Thus, the ancestor of the OPG091 gene might have been acquired from a bacterial source at the onset of poxvirus evolution.</text>
</comment>
<comment type="similarity">
    <text evidence="2">Belongs to the orthopoxvirus OPG091 family.</text>
</comment>
<organismHost>
    <name type="scientific">Homo sapiens</name>
    <name type="common">Human</name>
    <dbReference type="NCBI Taxonomy" id="9606"/>
</organismHost>
<reference key="1">
    <citation type="journal article" date="1993" name="Nature">
        <title>Potential virulence determinants in terminal regions of variola smallpox virus genome.</title>
        <authorList>
            <person name="Massung R.F."/>
            <person name="Esposito J.J."/>
            <person name="Liu L.I."/>
            <person name="Qi J."/>
            <person name="Utterback T.R."/>
            <person name="Knight J.C."/>
            <person name="Aubin L."/>
            <person name="Yuran T.E."/>
            <person name="Parsons J.M."/>
            <person name="Loparev V.N."/>
            <person name="Selivanov N.A."/>
            <person name="Cavallaro K.F."/>
            <person name="Kerlavage A.R."/>
            <person name="Mahy B.W.J."/>
            <person name="Venter J.C."/>
        </authorList>
    </citation>
    <scope>NUCLEOTIDE SEQUENCE [GENOMIC DNA]</scope>
    <source>
        <strain>Bangladesh-1975</strain>
    </source>
</reference>
<sequence>MDPVNFIKTYAPRGSIIFINYTMSLTSHLNPSIEKHVGIYYGTLLSEHLVVESTYRKGVQIVPLDSFFEGYLSAKVYMLENIQVMKIAADTSLTLLGIPYGFGHNRMYCFKLVAECYKNAGINTSSKRILGKDIFLSQNFTDDNRWIKIYDSNNLTFWQIDYLKG</sequence>
<feature type="chain" id="PRO_0000448194" description="Protein OPG091">
    <location>
        <begin position="1"/>
        <end position="165"/>
    </location>
</feature>
<evidence type="ECO:0000250" key="1">
    <source>
        <dbReference type="UniProtKB" id="Q80HW9"/>
    </source>
</evidence>
<evidence type="ECO:0000305" key="2"/>
<organism>
    <name type="scientific">Variola virus</name>
    <dbReference type="NCBI Taxonomy" id="10255"/>
    <lineage>
        <taxon>Viruses</taxon>
        <taxon>Varidnaviria</taxon>
        <taxon>Bamfordvirae</taxon>
        <taxon>Nucleocytoviricota</taxon>
        <taxon>Pokkesviricetes</taxon>
        <taxon>Chitovirales</taxon>
        <taxon>Poxviridae</taxon>
        <taxon>Chordopoxvirinae</taxon>
        <taxon>Orthopoxvirus</taxon>
    </lineage>
</organism>
<accession>P0DOU4</accession>
<accession>P32996</accession>
<protein>
    <recommendedName>
        <fullName>Protein OPG091</fullName>
    </recommendedName>
    <alternativeName>
        <fullName>Uncharacterized protein G6</fullName>
    </alternativeName>
</protein>
<gene>
    <name type="primary">OPG091</name>
    <name type="ORF">G6R</name>
</gene>
<keyword id="KW-1035">Host cytoplasm</keyword>
<keyword id="KW-0426">Late protein</keyword>
<keyword id="KW-0946">Virion</keyword>